<evidence type="ECO:0000255" key="1">
    <source>
        <dbReference type="HAMAP-Rule" id="MF_01380"/>
    </source>
</evidence>
<proteinExistence type="inferred from homology"/>
<organism>
    <name type="scientific">Delftia acidovorans (strain DSM 14801 / SPH-1)</name>
    <dbReference type="NCBI Taxonomy" id="398578"/>
    <lineage>
        <taxon>Bacteria</taxon>
        <taxon>Pseudomonadati</taxon>
        <taxon>Pseudomonadota</taxon>
        <taxon>Betaproteobacteria</taxon>
        <taxon>Burkholderiales</taxon>
        <taxon>Comamonadaceae</taxon>
        <taxon>Delftia</taxon>
    </lineage>
</organism>
<reference key="1">
    <citation type="submission" date="2007-11" db="EMBL/GenBank/DDBJ databases">
        <title>Complete sequence of Delftia acidovorans DSM 14801 / SPH-1.</title>
        <authorList>
            <person name="Copeland A."/>
            <person name="Lucas S."/>
            <person name="Lapidus A."/>
            <person name="Barry K."/>
            <person name="Glavina del Rio T."/>
            <person name="Dalin E."/>
            <person name="Tice H."/>
            <person name="Pitluck S."/>
            <person name="Lowry S."/>
            <person name="Clum A."/>
            <person name="Schmutz J."/>
            <person name="Larimer F."/>
            <person name="Land M."/>
            <person name="Hauser L."/>
            <person name="Kyrpides N."/>
            <person name="Kim E."/>
            <person name="Schleheck D."/>
            <person name="Richardson P."/>
        </authorList>
    </citation>
    <scope>NUCLEOTIDE SEQUENCE [LARGE SCALE GENOMIC DNA]</scope>
    <source>
        <strain>DSM 14801 / SPH-1</strain>
    </source>
</reference>
<name>ERPA_DELAS</name>
<protein>
    <recommendedName>
        <fullName evidence="1">Putative iron-sulfur cluster insertion protein ErpA</fullName>
    </recommendedName>
</protein>
<dbReference type="EMBL" id="CP000884">
    <property type="protein sequence ID" value="ABX38540.1"/>
    <property type="molecule type" value="Genomic_DNA"/>
</dbReference>
<dbReference type="RefSeq" id="WP_012207709.1">
    <property type="nucleotide sequence ID" value="NC_010002.1"/>
</dbReference>
<dbReference type="SMR" id="A9C177"/>
<dbReference type="STRING" id="398578.Daci_5912"/>
<dbReference type="GeneID" id="24119117"/>
<dbReference type="KEGG" id="dac:Daci_5912"/>
<dbReference type="eggNOG" id="COG0316">
    <property type="taxonomic scope" value="Bacteria"/>
</dbReference>
<dbReference type="HOGENOM" id="CLU_069054_5_3_4"/>
<dbReference type="Proteomes" id="UP000000784">
    <property type="component" value="Chromosome"/>
</dbReference>
<dbReference type="GO" id="GO:0051537">
    <property type="term" value="F:2 iron, 2 sulfur cluster binding"/>
    <property type="evidence" value="ECO:0007669"/>
    <property type="project" value="TreeGrafter"/>
</dbReference>
<dbReference type="GO" id="GO:0051539">
    <property type="term" value="F:4 iron, 4 sulfur cluster binding"/>
    <property type="evidence" value="ECO:0007669"/>
    <property type="project" value="TreeGrafter"/>
</dbReference>
<dbReference type="GO" id="GO:0005506">
    <property type="term" value="F:iron ion binding"/>
    <property type="evidence" value="ECO:0007669"/>
    <property type="project" value="UniProtKB-UniRule"/>
</dbReference>
<dbReference type="GO" id="GO:0016226">
    <property type="term" value="P:iron-sulfur cluster assembly"/>
    <property type="evidence" value="ECO:0007669"/>
    <property type="project" value="UniProtKB-UniRule"/>
</dbReference>
<dbReference type="FunFam" id="2.60.300.12:FF:000002">
    <property type="entry name" value="Iron-sulfur cluster insertion protein ErpA"/>
    <property type="match status" value="1"/>
</dbReference>
<dbReference type="Gene3D" id="2.60.300.12">
    <property type="entry name" value="HesB-like domain"/>
    <property type="match status" value="1"/>
</dbReference>
<dbReference type="HAMAP" id="MF_01380">
    <property type="entry name" value="Fe_S_insert_ErpA"/>
    <property type="match status" value="1"/>
</dbReference>
<dbReference type="InterPro" id="IPR000361">
    <property type="entry name" value="FeS_biogenesis"/>
</dbReference>
<dbReference type="InterPro" id="IPR016092">
    <property type="entry name" value="FeS_cluster_insertion"/>
</dbReference>
<dbReference type="InterPro" id="IPR017870">
    <property type="entry name" value="FeS_cluster_insertion_CS"/>
</dbReference>
<dbReference type="InterPro" id="IPR023063">
    <property type="entry name" value="FeS_cluster_insertion_RrpA"/>
</dbReference>
<dbReference type="InterPro" id="IPR035903">
    <property type="entry name" value="HesB-like_dom_sf"/>
</dbReference>
<dbReference type="NCBIfam" id="TIGR00049">
    <property type="entry name" value="iron-sulfur cluster assembly accessory protein"/>
    <property type="match status" value="1"/>
</dbReference>
<dbReference type="NCBIfam" id="NF010147">
    <property type="entry name" value="PRK13623.1"/>
    <property type="match status" value="1"/>
</dbReference>
<dbReference type="PANTHER" id="PTHR43011">
    <property type="entry name" value="IRON-SULFUR CLUSTER ASSEMBLY 2 HOMOLOG, MITOCHONDRIAL"/>
    <property type="match status" value="1"/>
</dbReference>
<dbReference type="PANTHER" id="PTHR43011:SF1">
    <property type="entry name" value="IRON-SULFUR CLUSTER ASSEMBLY 2 HOMOLOG, MITOCHONDRIAL"/>
    <property type="match status" value="1"/>
</dbReference>
<dbReference type="Pfam" id="PF01521">
    <property type="entry name" value="Fe-S_biosyn"/>
    <property type="match status" value="1"/>
</dbReference>
<dbReference type="SUPFAM" id="SSF89360">
    <property type="entry name" value="HesB-like domain"/>
    <property type="match status" value="1"/>
</dbReference>
<dbReference type="PROSITE" id="PS01152">
    <property type="entry name" value="HESB"/>
    <property type="match status" value="1"/>
</dbReference>
<gene>
    <name evidence="1" type="primary">erpA</name>
    <name type="ordered locus">Daci_5912</name>
</gene>
<sequence length="124" mass="13201">MSAVAEITETTTTEMPTPIVFTDSAAAKVADLIAEEGNPDLKLRVFVQGGGCSGFQYGFTFDEITNDDDTTMTKNGVSLLIDAMSYQYLVGAEIDYKEDLQGAQFVIKNPNASTTCGCGSSFSV</sequence>
<accession>A9C177</accession>
<keyword id="KW-0408">Iron</keyword>
<keyword id="KW-0411">Iron-sulfur</keyword>
<keyword id="KW-0479">Metal-binding</keyword>
<keyword id="KW-1185">Reference proteome</keyword>
<feature type="chain" id="PRO_1000144905" description="Putative iron-sulfur cluster insertion protein ErpA">
    <location>
        <begin position="1"/>
        <end position="124"/>
    </location>
</feature>
<feature type="binding site" evidence="1">
    <location>
        <position position="52"/>
    </location>
    <ligand>
        <name>iron-sulfur cluster</name>
        <dbReference type="ChEBI" id="CHEBI:30408"/>
    </ligand>
</feature>
<feature type="binding site" evidence="1">
    <location>
        <position position="116"/>
    </location>
    <ligand>
        <name>iron-sulfur cluster</name>
        <dbReference type="ChEBI" id="CHEBI:30408"/>
    </ligand>
</feature>
<feature type="binding site" evidence="1">
    <location>
        <position position="118"/>
    </location>
    <ligand>
        <name>iron-sulfur cluster</name>
        <dbReference type="ChEBI" id="CHEBI:30408"/>
    </ligand>
</feature>
<comment type="function">
    <text evidence="1">Required for insertion of 4Fe-4S clusters.</text>
</comment>
<comment type="cofactor">
    <cofactor evidence="1">
        <name>iron-sulfur cluster</name>
        <dbReference type="ChEBI" id="CHEBI:30408"/>
    </cofactor>
    <text evidence="1">Binds 1 iron-sulfur cluster per subunit.</text>
</comment>
<comment type="subunit">
    <text evidence="1">Homodimer.</text>
</comment>
<comment type="similarity">
    <text evidence="1">Belongs to the HesB/IscA family.</text>
</comment>